<name>YXEM_BACSU</name>
<accession>P54952</accession>
<protein>
    <recommendedName>
        <fullName>Probable amino-acid-binding protein YxeM</fullName>
    </recommendedName>
</protein>
<evidence type="ECO:0000255" key="1">
    <source>
        <dbReference type="PROSITE-ProRule" id="PRU00303"/>
    </source>
</evidence>
<evidence type="ECO:0000269" key="2">
    <source>
    </source>
</evidence>
<evidence type="ECO:0000269" key="3">
    <source>
    </source>
</evidence>
<evidence type="ECO:0000305" key="4"/>
<gene>
    <name type="primary">yxeM</name>
    <name type="ordered locus">BSU39500</name>
    <name type="ORF">LP9E</name>
</gene>
<sequence length="264" mass="29311">MKMKKWTVLVVAALLAVLSACGNGNSSSKEDDNVLHVGATGQSYPFAYKENGKLTGFDVEVMEAVAKKIDMKLDWKLLEFSGLMGELQTGKLDTISNQVAVTDERKETYNFTKPYAYAGTQIVVKKDNTDIKSVDDLKGKTVAAVLGSNHAKNLESKDPDKKINIKTYETQEGTLKDVAYGRVDAYVNSRTVLIAQIKKTGLPLKLAGDPIVYEQVAFPFAKDDAHDKLRKKVNKALDELRKDGTLKKLSEKYFNEDITVEQKH</sequence>
<organism>
    <name type="scientific">Bacillus subtilis (strain 168)</name>
    <dbReference type="NCBI Taxonomy" id="224308"/>
    <lineage>
        <taxon>Bacteria</taxon>
        <taxon>Bacillati</taxon>
        <taxon>Bacillota</taxon>
        <taxon>Bacilli</taxon>
        <taxon>Bacillales</taxon>
        <taxon>Bacillaceae</taxon>
        <taxon>Bacillus</taxon>
    </lineage>
</organism>
<dbReference type="EMBL" id="D45912">
    <property type="protein sequence ID" value="BAA08329.1"/>
    <property type="molecule type" value="Genomic_DNA"/>
</dbReference>
<dbReference type="EMBL" id="AL009126">
    <property type="protein sequence ID" value="CAB15986.1"/>
    <property type="molecule type" value="Genomic_DNA"/>
</dbReference>
<dbReference type="PIR" id="G70075">
    <property type="entry name" value="G70075"/>
</dbReference>
<dbReference type="RefSeq" id="NP_391829.1">
    <property type="nucleotide sequence ID" value="NC_000964.3"/>
</dbReference>
<dbReference type="RefSeq" id="WP_003227109.1">
    <property type="nucleotide sequence ID" value="NZ_OZ025638.1"/>
</dbReference>
<dbReference type="SMR" id="P54952"/>
<dbReference type="FunCoup" id="P54952">
    <property type="interactions" value="145"/>
</dbReference>
<dbReference type="STRING" id="224308.BSU39500"/>
<dbReference type="PaxDb" id="224308-BSU39500"/>
<dbReference type="EnsemblBacteria" id="CAB15986">
    <property type="protein sequence ID" value="CAB15986"/>
    <property type="gene ID" value="BSU_39500"/>
</dbReference>
<dbReference type="GeneID" id="937568"/>
<dbReference type="KEGG" id="bsu:BSU39500"/>
<dbReference type="PATRIC" id="fig|224308.179.peg.4275"/>
<dbReference type="eggNOG" id="COG0834">
    <property type="taxonomic scope" value="Bacteria"/>
</dbReference>
<dbReference type="InParanoid" id="P54952"/>
<dbReference type="OrthoDB" id="8613538at2"/>
<dbReference type="PhylomeDB" id="P54952"/>
<dbReference type="BioCyc" id="BSUB:BSU39500-MONOMER"/>
<dbReference type="Proteomes" id="UP000001570">
    <property type="component" value="Chromosome"/>
</dbReference>
<dbReference type="GO" id="GO:0045121">
    <property type="term" value="C:membrane raft"/>
    <property type="evidence" value="ECO:0007669"/>
    <property type="project" value="UniProtKB-SubCell"/>
</dbReference>
<dbReference type="GO" id="GO:0005886">
    <property type="term" value="C:plasma membrane"/>
    <property type="evidence" value="ECO:0007669"/>
    <property type="project" value="UniProtKB-SubCell"/>
</dbReference>
<dbReference type="GO" id="GO:0006865">
    <property type="term" value="P:amino acid transport"/>
    <property type="evidence" value="ECO:0007669"/>
    <property type="project" value="UniProtKB-KW"/>
</dbReference>
<dbReference type="CDD" id="cd13709">
    <property type="entry name" value="PBP2_YxeM"/>
    <property type="match status" value="1"/>
</dbReference>
<dbReference type="Gene3D" id="3.40.190.10">
    <property type="entry name" value="Periplasmic binding protein-like II"/>
    <property type="match status" value="2"/>
</dbReference>
<dbReference type="InterPro" id="IPR018313">
    <property type="entry name" value="SBP_3_CS"/>
</dbReference>
<dbReference type="InterPro" id="IPR001638">
    <property type="entry name" value="Solute-binding_3/MltF_N"/>
</dbReference>
<dbReference type="PANTHER" id="PTHR35936:SF19">
    <property type="entry name" value="AMINO-ACID-BINDING PROTEIN YXEM-RELATED"/>
    <property type="match status" value="1"/>
</dbReference>
<dbReference type="PANTHER" id="PTHR35936">
    <property type="entry name" value="MEMBRANE-BOUND LYTIC MUREIN TRANSGLYCOSYLASE F"/>
    <property type="match status" value="1"/>
</dbReference>
<dbReference type="Pfam" id="PF00497">
    <property type="entry name" value="SBP_bac_3"/>
    <property type="match status" value="1"/>
</dbReference>
<dbReference type="SMART" id="SM00062">
    <property type="entry name" value="PBPb"/>
    <property type="match status" value="1"/>
</dbReference>
<dbReference type="SUPFAM" id="SSF53850">
    <property type="entry name" value="Periplasmic binding protein-like II"/>
    <property type="match status" value="1"/>
</dbReference>
<dbReference type="PROSITE" id="PS51257">
    <property type="entry name" value="PROKAR_LIPOPROTEIN"/>
    <property type="match status" value="1"/>
</dbReference>
<dbReference type="PROSITE" id="PS01039">
    <property type="entry name" value="SBP_BACTERIAL_3"/>
    <property type="match status" value="1"/>
</dbReference>
<keyword id="KW-0029">Amino-acid transport</keyword>
<keyword id="KW-1003">Cell membrane</keyword>
<keyword id="KW-0449">Lipoprotein</keyword>
<keyword id="KW-0472">Membrane</keyword>
<keyword id="KW-0564">Palmitate</keyword>
<keyword id="KW-1185">Reference proteome</keyword>
<keyword id="KW-0732">Signal</keyword>
<keyword id="KW-0813">Transport</keyword>
<comment type="function">
    <text>Probably part of the ABC transporter complex YxeMNO that could be involved in amino-acid import. May transport S-methylcysteine.</text>
</comment>
<comment type="subunit">
    <text evidence="4">The complex is composed of two ATP-binding proteins (YxeO), two transmembrane proteins (YxeN) and a solute-binding protein (YxeM).</text>
</comment>
<comment type="subcellular location">
    <subcellularLocation>
        <location evidence="3 4">Cell membrane</location>
        <topology evidence="4">Lipid-anchor</topology>
    </subcellularLocation>
    <subcellularLocation>
        <location evidence="3">Membrane raft</location>
        <topology evidence="4">Lipid-anchor</topology>
    </subcellularLocation>
    <text evidence="3">Present in detergent-resistant membrane (DRM) fractions that may be equivalent to eukaryotic membrane rafts; these rafts include proteins involved in signaling, molecule trafficking and protein secretion.</text>
</comment>
<comment type="induction">
    <text evidence="2">More strongly expressed in the presence of methionine than in the presence of sulfate.</text>
</comment>
<comment type="similarity">
    <text evidence="4">Belongs to the bacterial solute-binding protein 3 family.</text>
</comment>
<feature type="signal peptide" evidence="1">
    <location>
        <begin position="1"/>
        <end position="20"/>
    </location>
</feature>
<feature type="chain" id="PRO_0000031781" description="Probable amino-acid-binding protein YxeM">
    <location>
        <begin position="21"/>
        <end position="264"/>
    </location>
</feature>
<feature type="lipid moiety-binding region" description="N-palmitoyl cysteine" evidence="1">
    <location>
        <position position="21"/>
    </location>
</feature>
<feature type="lipid moiety-binding region" description="S-diacylglycerol cysteine" evidence="1">
    <location>
        <position position="21"/>
    </location>
</feature>
<proteinExistence type="evidence at protein level"/>
<reference key="1">
    <citation type="journal article" date="1995" name="DNA Res.">
        <title>Cloning and sequencing of a 23-kb region of the Bacillus subtilis genome between the iol and hut operons.</title>
        <authorList>
            <person name="Yoshida K."/>
            <person name="Fujimyra M."/>
            <person name="Yanai N."/>
            <person name="Fujita Y."/>
        </authorList>
    </citation>
    <scope>NUCLEOTIDE SEQUENCE [GENOMIC DNA]</scope>
    <source>
        <strain>168 / BGSC1A1</strain>
    </source>
</reference>
<reference key="2">
    <citation type="journal article" date="1997" name="Nature">
        <title>The complete genome sequence of the Gram-positive bacterium Bacillus subtilis.</title>
        <authorList>
            <person name="Kunst F."/>
            <person name="Ogasawara N."/>
            <person name="Moszer I."/>
            <person name="Albertini A.M."/>
            <person name="Alloni G."/>
            <person name="Azevedo V."/>
            <person name="Bertero M.G."/>
            <person name="Bessieres P."/>
            <person name="Bolotin A."/>
            <person name="Borchert S."/>
            <person name="Borriss R."/>
            <person name="Boursier L."/>
            <person name="Brans A."/>
            <person name="Braun M."/>
            <person name="Brignell S.C."/>
            <person name="Bron S."/>
            <person name="Brouillet S."/>
            <person name="Bruschi C.V."/>
            <person name="Caldwell B."/>
            <person name="Capuano V."/>
            <person name="Carter N.M."/>
            <person name="Choi S.-K."/>
            <person name="Codani J.-J."/>
            <person name="Connerton I.F."/>
            <person name="Cummings N.J."/>
            <person name="Daniel R.A."/>
            <person name="Denizot F."/>
            <person name="Devine K.M."/>
            <person name="Duesterhoeft A."/>
            <person name="Ehrlich S.D."/>
            <person name="Emmerson P.T."/>
            <person name="Entian K.-D."/>
            <person name="Errington J."/>
            <person name="Fabret C."/>
            <person name="Ferrari E."/>
            <person name="Foulger D."/>
            <person name="Fritz C."/>
            <person name="Fujita M."/>
            <person name="Fujita Y."/>
            <person name="Fuma S."/>
            <person name="Galizzi A."/>
            <person name="Galleron N."/>
            <person name="Ghim S.-Y."/>
            <person name="Glaser P."/>
            <person name="Goffeau A."/>
            <person name="Golightly E.J."/>
            <person name="Grandi G."/>
            <person name="Guiseppi G."/>
            <person name="Guy B.J."/>
            <person name="Haga K."/>
            <person name="Haiech J."/>
            <person name="Harwood C.R."/>
            <person name="Henaut A."/>
            <person name="Hilbert H."/>
            <person name="Holsappel S."/>
            <person name="Hosono S."/>
            <person name="Hullo M.-F."/>
            <person name="Itaya M."/>
            <person name="Jones L.-M."/>
            <person name="Joris B."/>
            <person name="Karamata D."/>
            <person name="Kasahara Y."/>
            <person name="Klaerr-Blanchard M."/>
            <person name="Klein C."/>
            <person name="Kobayashi Y."/>
            <person name="Koetter P."/>
            <person name="Koningstein G."/>
            <person name="Krogh S."/>
            <person name="Kumano M."/>
            <person name="Kurita K."/>
            <person name="Lapidus A."/>
            <person name="Lardinois S."/>
            <person name="Lauber J."/>
            <person name="Lazarevic V."/>
            <person name="Lee S.-M."/>
            <person name="Levine A."/>
            <person name="Liu H."/>
            <person name="Masuda S."/>
            <person name="Mauel C."/>
            <person name="Medigue C."/>
            <person name="Medina N."/>
            <person name="Mellado R.P."/>
            <person name="Mizuno M."/>
            <person name="Moestl D."/>
            <person name="Nakai S."/>
            <person name="Noback M."/>
            <person name="Noone D."/>
            <person name="O'Reilly M."/>
            <person name="Ogawa K."/>
            <person name="Ogiwara A."/>
            <person name="Oudega B."/>
            <person name="Park S.-H."/>
            <person name="Parro V."/>
            <person name="Pohl T.M."/>
            <person name="Portetelle D."/>
            <person name="Porwollik S."/>
            <person name="Prescott A.M."/>
            <person name="Presecan E."/>
            <person name="Pujic P."/>
            <person name="Purnelle B."/>
            <person name="Rapoport G."/>
            <person name="Rey M."/>
            <person name="Reynolds S."/>
            <person name="Rieger M."/>
            <person name="Rivolta C."/>
            <person name="Rocha E."/>
            <person name="Roche B."/>
            <person name="Rose M."/>
            <person name="Sadaie Y."/>
            <person name="Sato T."/>
            <person name="Scanlan E."/>
            <person name="Schleich S."/>
            <person name="Schroeter R."/>
            <person name="Scoffone F."/>
            <person name="Sekiguchi J."/>
            <person name="Sekowska A."/>
            <person name="Seror S.J."/>
            <person name="Serror P."/>
            <person name="Shin B.-S."/>
            <person name="Soldo B."/>
            <person name="Sorokin A."/>
            <person name="Tacconi E."/>
            <person name="Takagi T."/>
            <person name="Takahashi H."/>
            <person name="Takemaru K."/>
            <person name="Takeuchi M."/>
            <person name="Tamakoshi A."/>
            <person name="Tanaka T."/>
            <person name="Terpstra P."/>
            <person name="Tognoni A."/>
            <person name="Tosato V."/>
            <person name="Uchiyama S."/>
            <person name="Vandenbol M."/>
            <person name="Vannier F."/>
            <person name="Vassarotti A."/>
            <person name="Viari A."/>
            <person name="Wambutt R."/>
            <person name="Wedler E."/>
            <person name="Wedler H."/>
            <person name="Weitzenegger T."/>
            <person name="Winters P."/>
            <person name="Wipat A."/>
            <person name="Yamamoto H."/>
            <person name="Yamane K."/>
            <person name="Yasumoto K."/>
            <person name="Yata K."/>
            <person name="Yoshida K."/>
            <person name="Yoshikawa H.-F."/>
            <person name="Zumstein E."/>
            <person name="Yoshikawa H."/>
            <person name="Danchin A."/>
        </authorList>
    </citation>
    <scope>NUCLEOTIDE SEQUENCE [LARGE SCALE GENOMIC DNA]</scope>
    <source>
        <strain>168</strain>
    </source>
</reference>
<reference key="3">
    <citation type="journal article" date="2002" name="J. Bacteriol.">
        <title>Global expression profile of Bacillus subtilis grown in the presence of sulfate or methionine.</title>
        <authorList>
            <person name="Auger S."/>
            <person name="Danchin A."/>
            <person name="Martin-Verstraete I."/>
        </authorList>
    </citation>
    <scope>INDUCTION</scope>
    <source>
        <strain>168</strain>
    </source>
</reference>
<reference key="4">
    <citation type="journal article" date="2004" name="J. Bacteriol.">
        <title>Three different systems participate in L-cystine uptake in Bacillus subtilis.</title>
        <authorList>
            <person name="Burguiere P."/>
            <person name="Auger S."/>
            <person name="Hullo M.-F."/>
            <person name="Danchin A."/>
            <person name="Martin-Verstraete I."/>
        </authorList>
    </citation>
    <scope>PROBABLE FUNCTION IN S-METHYLCYSTEINE TRANSPORT</scope>
    <source>
        <strain>168</strain>
    </source>
</reference>
<reference key="5">
    <citation type="journal article" date="2012" name="Mol. Microbiol.">
        <title>The biofilm formation defect of a Bacillus subtilis flotillin-defective mutant involves the protease FtsH.</title>
        <authorList>
            <person name="Yepes A."/>
            <person name="Schneider J."/>
            <person name="Mielich B."/>
            <person name="Koch G."/>
            <person name="Garcia-Betancur J.C."/>
            <person name="Ramamurthi K.S."/>
            <person name="Vlamakis H."/>
            <person name="Lopez D."/>
        </authorList>
    </citation>
    <scope>IDENTIFICATION BY MASS SPECTROMETRY</scope>
    <scope>SUBCELLULAR LOCATION</scope>
    <source>
        <strain>168 / Marburg / ATCC 6051 / DSM 10 / JCM 1465 / NBRC 13719 / NCIMB 3610 / NRRL NRS-744 / VKM B-501</strain>
    </source>
</reference>